<keyword id="KW-1185">Reference proteome</keyword>
<feature type="chain" id="PRO_0000107127" description="Uncharacterized protein MJ0978">
    <location>
        <begin position="1"/>
        <end position="147"/>
    </location>
</feature>
<evidence type="ECO:0000305" key="1"/>
<proteinExistence type="predicted"/>
<gene>
    <name type="ordered locus">MJ0978</name>
</gene>
<comment type="similarity">
    <text evidence="1">To M.jannaschii MJ1086 N-terminal region.</text>
</comment>
<name>Y978_METJA</name>
<accession>Q58388</accession>
<protein>
    <recommendedName>
        <fullName>Uncharacterized protein MJ0978</fullName>
    </recommendedName>
</protein>
<dbReference type="EMBL" id="L77117">
    <property type="protein sequence ID" value="AAB98993.1"/>
    <property type="molecule type" value="Genomic_DNA"/>
</dbReference>
<dbReference type="PIR" id="B64422">
    <property type="entry name" value="B64422"/>
</dbReference>
<dbReference type="SMR" id="Q58388"/>
<dbReference type="STRING" id="243232.MJ_0978"/>
<dbReference type="PaxDb" id="243232-MJ_0978"/>
<dbReference type="EnsemblBacteria" id="AAB98993">
    <property type="protein sequence ID" value="AAB98993"/>
    <property type="gene ID" value="MJ_0978"/>
</dbReference>
<dbReference type="KEGG" id="mja:MJ_0978"/>
<dbReference type="eggNOG" id="arCOG05125">
    <property type="taxonomic scope" value="Archaea"/>
</dbReference>
<dbReference type="HOGENOM" id="CLU_086561_0_0_2"/>
<dbReference type="InParanoid" id="Q58388"/>
<dbReference type="Proteomes" id="UP000000805">
    <property type="component" value="Chromosome"/>
</dbReference>
<dbReference type="InterPro" id="IPR020209">
    <property type="entry name" value="Cas6b_C"/>
</dbReference>
<dbReference type="Pfam" id="PF17262">
    <property type="entry name" value="Cas6b_C"/>
    <property type="match status" value="1"/>
</dbReference>
<organism>
    <name type="scientific">Methanocaldococcus jannaschii (strain ATCC 43067 / DSM 2661 / JAL-1 / JCM 10045 / NBRC 100440)</name>
    <name type="common">Methanococcus jannaschii</name>
    <dbReference type="NCBI Taxonomy" id="243232"/>
    <lineage>
        <taxon>Archaea</taxon>
        <taxon>Methanobacteriati</taxon>
        <taxon>Methanobacteriota</taxon>
        <taxon>Methanomada group</taxon>
        <taxon>Methanococci</taxon>
        <taxon>Methanococcales</taxon>
        <taxon>Methanocaldococcaceae</taxon>
        <taxon>Methanocaldococcus</taxon>
    </lineage>
</organism>
<sequence length="147" mass="17112">MGEIILNIRELNLKGEVYRVVNGYAKVKFEEFGVAENMIKYKFISPWIALNEKNYLEYKELDEDGKKELLEKILVGNILSMSKYLDYTVEEKLKAGLLEYEDFVVKYKGNKFIGFWGEFLVNFNIPNYLGIGRKVSKGFGSVIRVEE</sequence>
<reference key="1">
    <citation type="journal article" date="1996" name="Science">
        <title>Complete genome sequence of the methanogenic archaeon, Methanococcus jannaschii.</title>
        <authorList>
            <person name="Bult C.J."/>
            <person name="White O."/>
            <person name="Olsen G.J."/>
            <person name="Zhou L."/>
            <person name="Fleischmann R.D."/>
            <person name="Sutton G.G."/>
            <person name="Blake J.A."/>
            <person name="FitzGerald L.M."/>
            <person name="Clayton R.A."/>
            <person name="Gocayne J.D."/>
            <person name="Kerlavage A.R."/>
            <person name="Dougherty B.A."/>
            <person name="Tomb J.-F."/>
            <person name="Adams M.D."/>
            <person name="Reich C.I."/>
            <person name="Overbeek R."/>
            <person name="Kirkness E.F."/>
            <person name="Weinstock K.G."/>
            <person name="Merrick J.M."/>
            <person name="Glodek A."/>
            <person name="Scott J.L."/>
            <person name="Geoghagen N.S.M."/>
            <person name="Weidman J.F."/>
            <person name="Fuhrmann J.L."/>
            <person name="Nguyen D."/>
            <person name="Utterback T.R."/>
            <person name="Kelley J.M."/>
            <person name="Peterson J.D."/>
            <person name="Sadow P.W."/>
            <person name="Hanna M.C."/>
            <person name="Cotton M.D."/>
            <person name="Roberts K.M."/>
            <person name="Hurst M.A."/>
            <person name="Kaine B.P."/>
            <person name="Borodovsky M."/>
            <person name="Klenk H.-P."/>
            <person name="Fraser C.M."/>
            <person name="Smith H.O."/>
            <person name="Woese C.R."/>
            <person name="Venter J.C."/>
        </authorList>
    </citation>
    <scope>NUCLEOTIDE SEQUENCE [LARGE SCALE GENOMIC DNA]</scope>
    <source>
        <strain>ATCC 43067 / DSM 2661 / JAL-1 / JCM 10045 / NBRC 100440</strain>
    </source>
</reference>